<comment type="function">
    <text evidence="4">Catalyzes the phosphorylation of D-fructose 6-phosphate to fructose 1,6-bisphosphate by ATP, the first committing step of glycolysis.</text>
</comment>
<comment type="catalytic activity">
    <reaction evidence="4">
        <text>beta-D-fructose 6-phosphate + ATP = beta-D-fructose 1,6-bisphosphate + ADP + H(+)</text>
        <dbReference type="Rhea" id="RHEA:16109"/>
        <dbReference type="ChEBI" id="CHEBI:15378"/>
        <dbReference type="ChEBI" id="CHEBI:30616"/>
        <dbReference type="ChEBI" id="CHEBI:32966"/>
        <dbReference type="ChEBI" id="CHEBI:57634"/>
        <dbReference type="ChEBI" id="CHEBI:456216"/>
        <dbReference type="EC" id="2.7.1.11"/>
    </reaction>
</comment>
<comment type="cofactor">
    <cofactor>
        <name>Mg(2+)</name>
        <dbReference type="ChEBI" id="CHEBI:18420"/>
    </cofactor>
</comment>
<comment type="activity regulation">
    <text evidence="4">Allosterically activated by ADP, AMP, or fructose 2,6-bisphosphate, and allosterically inhibited by ATP or citrate.</text>
</comment>
<comment type="pathway">
    <text evidence="4">Carbohydrate degradation; glycolysis; D-glyceraldehyde 3-phosphate and glycerone phosphate from D-glucose: step 3/4.</text>
</comment>
<comment type="subunit">
    <text evidence="4 6">Homo- and heterotetramers (By similarity). Phosphofructokinase (PFK) enzyme functions as a tetramer composed of different combinations of 3 types of subunits, called PFKM (M), PFKL (L) and PFKP (P). The composition of the PFK tetramer differs according to the tissue type it is present in. The kinetic and regulatory properties of the tetrameric enzyme are dependent on the subunit composition, hence can vary across tissues (Probable). Interacts with ATG4B; promoting phosphorylation of ATG4B.</text>
</comment>
<comment type="subcellular location">
    <subcellularLocation>
        <location evidence="4">Cytoplasm</location>
    </subcellularLocation>
</comment>
<comment type="PTM">
    <text evidence="1">GlcNAcylation decreases enzyme activity.</text>
</comment>
<comment type="PTM">
    <text evidence="3">Phosphorylation at Ser-386 promotes interaction with ATG4B.</text>
</comment>
<comment type="similarity">
    <text evidence="4">Belongs to the phosphofructokinase type A (PFKA) family. ATP-dependent PFK group I subfamily. Eukaryotic two domain clade 'E' sub-subfamily.</text>
</comment>
<sequence>MDNKVSASPRGSYRKFLEHLSGAGKAIGVLTSGGDAQGMNAAVRAVVRMGIYVGAKVYFIYEGYQGMVDGGSNIVEANWESVSSILQVGGTIIGSARSKAFRTREGRLKAACNLIHRGITNLCVIGGSGSLTGANIFRMEWSGLLEELAQDGKIDNEAVQKYAYLNVVGMVGSIDNDFCGTDMTIGTDSACHRIIEVIDAIMTTAQSHQRTFVLEVMGRHCGYLALVSALACGADWVFLPESPPEEGWEEQMCVKLSENRAQKKRLNIIIVAEGAIDTLNRPITSEKIKELVVTQLGYDTRVTILGHVQRGGTPSAFDRILASRMGVEAVLALLEATPETPACVVSLSGNHAVRLPLVECVQMTQEVQKAMDERRFKDAVQLRGRSFENNLNTYKRLAIKLPDDKIQKSNCNVAVINVGAPAAGMNAAVRSAVRVGIADGHKMFAVYDGFDGFAKGQIKEIRWGDVGGWTGQGGSILGTKRILPGKYLEEIATQIRTHNINAILIIGGFEAYLGLLELSAAREKHEEFCVPMVMVPATVSNNVPGSDFSIGADTALNTITDTCDRIKQSASGTKRRVFIIETMGGYCGYLANMGGLAAGADAAYIFEEPFDIRDLQSNVEHLTEKMKTTIQRGLVLRNESCSENYTTDFIYQLYSEEGRGVFDCRKNVLGHMQQGGAPSPFDRNFGTKISARAMQWITTKLKESPGKGKRFVSDDSICVLGISKRNVLFQPVAELKNETDFEHRIPKEQWWLKLRPLMKILAKYKTSYDVSDSGQLVPVRHRGGPEEPAAI</sequence>
<gene>
    <name type="primary">PFKP</name>
</gene>
<evidence type="ECO:0000250" key="1"/>
<evidence type="ECO:0000250" key="2">
    <source>
        <dbReference type="UniProtKB" id="P47860"/>
    </source>
</evidence>
<evidence type="ECO:0000250" key="3">
    <source>
        <dbReference type="UniProtKB" id="Q01813"/>
    </source>
</evidence>
<evidence type="ECO:0000255" key="4">
    <source>
        <dbReference type="HAMAP-Rule" id="MF_03184"/>
    </source>
</evidence>
<evidence type="ECO:0000269" key="5">
    <source>
    </source>
</evidence>
<evidence type="ECO:0000305" key="6"/>
<proteinExistence type="evidence at protein level"/>
<accession>P47859</accession>
<dbReference type="EC" id="2.7.1.11" evidence="4"/>
<dbReference type="EMBL" id="U01154">
    <property type="protein sequence ID" value="AAA17707.1"/>
    <property type="molecule type" value="mRNA"/>
</dbReference>
<dbReference type="PIR" id="A53206">
    <property type="entry name" value="A53206"/>
</dbReference>
<dbReference type="RefSeq" id="NP_001076217.1">
    <property type="nucleotide sequence ID" value="NM_001082748.1"/>
</dbReference>
<dbReference type="SMR" id="P47859"/>
<dbReference type="FunCoup" id="P47859">
    <property type="interactions" value="766"/>
</dbReference>
<dbReference type="STRING" id="9986.ENSOCUP00000026775"/>
<dbReference type="GlyCosmos" id="P47859">
    <property type="glycosylation" value="1 site, No reported glycans"/>
</dbReference>
<dbReference type="iPTMnet" id="P47859"/>
<dbReference type="PaxDb" id="9986-ENSOCUP00000026775"/>
<dbReference type="GeneID" id="100009526"/>
<dbReference type="KEGG" id="ocu:100009526"/>
<dbReference type="CTD" id="5214"/>
<dbReference type="eggNOG" id="KOG2440">
    <property type="taxonomic scope" value="Eukaryota"/>
</dbReference>
<dbReference type="InParanoid" id="P47859"/>
<dbReference type="OrthoDB" id="537915at2759"/>
<dbReference type="UniPathway" id="UPA00109">
    <property type="reaction ID" value="UER00182"/>
</dbReference>
<dbReference type="Proteomes" id="UP000001811">
    <property type="component" value="Unplaced"/>
</dbReference>
<dbReference type="GO" id="GO:0005945">
    <property type="term" value="C:6-phosphofructokinase complex"/>
    <property type="evidence" value="ECO:0007669"/>
    <property type="project" value="TreeGrafter"/>
</dbReference>
<dbReference type="GO" id="GO:0016020">
    <property type="term" value="C:membrane"/>
    <property type="evidence" value="ECO:0007669"/>
    <property type="project" value="TreeGrafter"/>
</dbReference>
<dbReference type="GO" id="GO:0003872">
    <property type="term" value="F:6-phosphofructokinase activity"/>
    <property type="evidence" value="ECO:0000314"/>
    <property type="project" value="UniProtKB"/>
</dbReference>
<dbReference type="GO" id="GO:0016208">
    <property type="term" value="F:AMP binding"/>
    <property type="evidence" value="ECO:0007669"/>
    <property type="project" value="TreeGrafter"/>
</dbReference>
<dbReference type="GO" id="GO:0005524">
    <property type="term" value="F:ATP binding"/>
    <property type="evidence" value="ECO:0007669"/>
    <property type="project" value="UniProtKB-KW"/>
</dbReference>
<dbReference type="GO" id="GO:0070095">
    <property type="term" value="F:fructose-6-phosphate binding"/>
    <property type="evidence" value="ECO:0007669"/>
    <property type="project" value="TreeGrafter"/>
</dbReference>
<dbReference type="GO" id="GO:0042802">
    <property type="term" value="F:identical protein binding"/>
    <property type="evidence" value="ECO:0007669"/>
    <property type="project" value="TreeGrafter"/>
</dbReference>
<dbReference type="GO" id="GO:0046872">
    <property type="term" value="F:metal ion binding"/>
    <property type="evidence" value="ECO:0007669"/>
    <property type="project" value="UniProtKB-KW"/>
</dbReference>
<dbReference type="GO" id="GO:0048029">
    <property type="term" value="F:monosaccharide binding"/>
    <property type="evidence" value="ECO:0007669"/>
    <property type="project" value="TreeGrafter"/>
</dbReference>
<dbReference type="GO" id="GO:0061621">
    <property type="term" value="P:canonical glycolysis"/>
    <property type="evidence" value="ECO:0007669"/>
    <property type="project" value="TreeGrafter"/>
</dbReference>
<dbReference type="GO" id="GO:0030388">
    <property type="term" value="P:fructose 1,6-bisphosphate metabolic process"/>
    <property type="evidence" value="ECO:0007669"/>
    <property type="project" value="TreeGrafter"/>
</dbReference>
<dbReference type="GO" id="GO:0006002">
    <property type="term" value="P:fructose 6-phosphate metabolic process"/>
    <property type="evidence" value="ECO:0007669"/>
    <property type="project" value="InterPro"/>
</dbReference>
<dbReference type="CDD" id="cd00764">
    <property type="entry name" value="Eukaryotic_PFK"/>
    <property type="match status" value="1"/>
</dbReference>
<dbReference type="FunFam" id="3.40.50.460:FF:000001">
    <property type="entry name" value="ATP-dependent 6-phosphofructokinase"/>
    <property type="match status" value="1"/>
</dbReference>
<dbReference type="FunFam" id="3.40.50.460:FF:000003">
    <property type="entry name" value="ATP-dependent 6-phosphofructokinase"/>
    <property type="match status" value="1"/>
</dbReference>
<dbReference type="FunFam" id="3.40.50.450:FF:000043">
    <property type="entry name" value="ATP-dependent 6-phosphofructokinase, platelet type"/>
    <property type="match status" value="1"/>
</dbReference>
<dbReference type="FunFam" id="3.40.50.450:FF:000064">
    <property type="entry name" value="Phosphofructokinase, platelet b"/>
    <property type="match status" value="1"/>
</dbReference>
<dbReference type="FunFam" id="3.40.50.450:FF:000086">
    <property type="entry name" value="Phosphofructokinase, platelet b"/>
    <property type="match status" value="1"/>
</dbReference>
<dbReference type="Gene3D" id="3.40.50.450">
    <property type="match status" value="2"/>
</dbReference>
<dbReference type="Gene3D" id="3.40.50.460">
    <property type="entry name" value="Phosphofructokinase domain"/>
    <property type="match status" value="2"/>
</dbReference>
<dbReference type="HAMAP" id="MF_03184">
    <property type="entry name" value="Phosphofructokinase_I_E"/>
    <property type="match status" value="1"/>
</dbReference>
<dbReference type="InterPro" id="IPR009161">
    <property type="entry name" value="6-Pfructokinase_euk"/>
</dbReference>
<dbReference type="InterPro" id="IPR022953">
    <property type="entry name" value="ATP_PFK"/>
</dbReference>
<dbReference type="InterPro" id="IPR041914">
    <property type="entry name" value="PFK_vert-type"/>
</dbReference>
<dbReference type="InterPro" id="IPR015912">
    <property type="entry name" value="Phosphofructokinase_CS"/>
</dbReference>
<dbReference type="InterPro" id="IPR000023">
    <property type="entry name" value="Phosphofructokinase_dom"/>
</dbReference>
<dbReference type="InterPro" id="IPR035966">
    <property type="entry name" value="PKF_sf"/>
</dbReference>
<dbReference type="NCBIfam" id="TIGR02478">
    <property type="entry name" value="6PF1K_euk"/>
    <property type="match status" value="1"/>
</dbReference>
<dbReference type="PANTHER" id="PTHR13697:SF5">
    <property type="entry name" value="ATP-DEPENDENT 6-PHOSPHOFRUCTOKINASE, PLATELET TYPE"/>
    <property type="match status" value="1"/>
</dbReference>
<dbReference type="PANTHER" id="PTHR13697">
    <property type="entry name" value="PHOSPHOFRUCTOKINASE"/>
    <property type="match status" value="1"/>
</dbReference>
<dbReference type="Pfam" id="PF00365">
    <property type="entry name" value="PFK"/>
    <property type="match status" value="2"/>
</dbReference>
<dbReference type="PIRSF" id="PIRSF000533">
    <property type="entry name" value="ATP_PFK_euk"/>
    <property type="match status" value="1"/>
</dbReference>
<dbReference type="PRINTS" id="PR00476">
    <property type="entry name" value="PHFRCTKINASE"/>
</dbReference>
<dbReference type="SUPFAM" id="SSF53784">
    <property type="entry name" value="Phosphofructokinase"/>
    <property type="match status" value="2"/>
</dbReference>
<dbReference type="PROSITE" id="PS00433">
    <property type="entry name" value="PHOSPHOFRUCTOKINASE"/>
    <property type="match status" value="2"/>
</dbReference>
<reference key="1">
    <citation type="journal article" date="1994" name="J. Biol. Chem.">
        <title>Structure and expression of the cDNA for the C isozyme of phosphofructo-1-kinase from rabbit brain.</title>
        <authorList>
            <person name="Li Y."/>
            <person name="Valaitis A.P."/>
            <person name="Latshaw S.P."/>
            <person name="Kwiatkowska D."/>
            <person name="Tripathi R.L."/>
            <person name="Campbell M.C."/>
            <person name="Kemp R.G."/>
        </authorList>
    </citation>
    <scope>NUCLEOTIDE SEQUENCE [MRNA]</scope>
    <scope>PARTIAL PROTEIN SEQUENCE</scope>
    <source>
        <tissue>Brain</tissue>
    </source>
</reference>
<reference key="2">
    <citation type="journal article" date="1989" name="Biochim. Biophys. Acta">
        <title>The sites of phosphorylation of rabbit brain phosphofructo-1-kinase by cyclic AMP-dependent protein kinase.</title>
        <authorList>
            <person name="Valaitis A.P."/>
            <person name="Foe L.G."/>
            <person name="Kwiatkowska D."/>
            <person name="Latshaw S.P."/>
            <person name="Kemp R.G."/>
        </authorList>
    </citation>
    <scope>PROTEIN SEQUENCE OF 5-17</scope>
    <scope>PHOSPHORYLATION AT SER-12</scope>
</reference>
<keyword id="KW-0007">Acetylation</keyword>
<keyword id="KW-0021">Allosteric enzyme</keyword>
<keyword id="KW-0067">ATP-binding</keyword>
<keyword id="KW-0963">Cytoplasm</keyword>
<keyword id="KW-0903">Direct protein sequencing</keyword>
<keyword id="KW-0324">Glycolysis</keyword>
<keyword id="KW-0325">Glycoprotein</keyword>
<keyword id="KW-0418">Kinase</keyword>
<keyword id="KW-0460">Magnesium</keyword>
<keyword id="KW-0479">Metal-binding</keyword>
<keyword id="KW-0547">Nucleotide-binding</keyword>
<keyword id="KW-0597">Phosphoprotein</keyword>
<keyword id="KW-1185">Reference proteome</keyword>
<keyword id="KW-0808">Transferase</keyword>
<protein>
    <recommendedName>
        <fullName evidence="4">ATP-dependent 6-phosphofructokinase, platelet type</fullName>
        <shortName evidence="4">ATP-PFK</shortName>
        <shortName>PFK-P</shortName>
        <ecNumber evidence="4">2.7.1.11</ecNumber>
    </recommendedName>
    <alternativeName>
        <fullName>6-phosphofructokinase type C</fullName>
    </alternativeName>
    <alternativeName>
        <fullName>Phosphofructo-1-kinase isozyme C</fullName>
        <shortName>PFK-C</shortName>
    </alternativeName>
    <alternativeName>
        <fullName evidence="4">Phosphohexokinase</fullName>
    </alternativeName>
</protein>
<name>PFKAP_RABIT</name>
<feature type="chain" id="PRO_0000112026" description="ATP-dependent 6-phosphofructokinase, platelet type">
    <location>
        <begin position="1"/>
        <end position="791"/>
    </location>
</feature>
<feature type="region of interest" description="N-terminal catalytic PFK domain 1">
    <location>
        <begin position="1"/>
        <end position="399"/>
    </location>
</feature>
<feature type="region of interest" description="Interdomain linker">
    <location>
        <begin position="400"/>
        <end position="411"/>
    </location>
</feature>
<feature type="region of interest" description="C-terminal regulatory PFK domain 2">
    <location>
        <begin position="412"/>
        <end position="791"/>
    </location>
</feature>
<feature type="active site" description="Proton acceptor" evidence="4">
    <location>
        <position position="175"/>
    </location>
</feature>
<feature type="binding site" evidence="4">
    <location>
        <position position="34"/>
    </location>
    <ligand>
        <name>ATP</name>
        <dbReference type="ChEBI" id="CHEBI:30616"/>
    </ligand>
</feature>
<feature type="binding site" evidence="4">
    <location>
        <begin position="97"/>
        <end position="98"/>
    </location>
    <ligand>
        <name>ATP</name>
        <dbReference type="ChEBI" id="CHEBI:30616"/>
    </ligand>
</feature>
<feature type="binding site" evidence="4">
    <location>
        <begin position="127"/>
        <end position="130"/>
    </location>
    <ligand>
        <name>ATP</name>
        <dbReference type="ChEBI" id="CHEBI:30616"/>
    </ligand>
</feature>
<feature type="binding site" description="in other chain" evidence="4">
    <location>
        <begin position="173"/>
        <end position="175"/>
    </location>
    <ligand>
        <name>substrate</name>
        <note>ligand shared between dimeric partners</note>
    </ligand>
</feature>
<feature type="binding site" evidence="4">
    <location>
        <position position="210"/>
    </location>
    <ligand>
        <name>substrate</name>
        <note>ligand shared between dimeric partners</note>
    </ligand>
</feature>
<feature type="binding site" description="in other chain" evidence="4">
    <location>
        <begin position="217"/>
        <end position="219"/>
    </location>
    <ligand>
        <name>substrate</name>
        <note>ligand shared between dimeric partners</note>
    </ligand>
</feature>
<feature type="binding site" description="in other chain" evidence="4">
    <location>
        <position position="273"/>
    </location>
    <ligand>
        <name>substrate</name>
        <note>ligand shared between dimeric partners</note>
    </ligand>
</feature>
<feature type="binding site" evidence="4">
    <location>
        <position position="301"/>
    </location>
    <ligand>
        <name>substrate</name>
        <note>ligand shared between dimeric partners</note>
    </ligand>
</feature>
<feature type="binding site" description="in other chain" evidence="4">
    <location>
        <begin position="307"/>
        <end position="310"/>
    </location>
    <ligand>
        <name>substrate</name>
        <note>ligand shared between dimeric partners</note>
    </ligand>
</feature>
<feature type="binding site" description="in other chain" evidence="4">
    <location>
        <position position="481"/>
    </location>
    <ligand>
        <name>beta-D-fructose 2,6-bisphosphate</name>
        <dbReference type="ChEBI" id="CHEBI:58579"/>
        <note>allosteric activator; ligand shared between dimeric partners</note>
    </ligand>
</feature>
<feature type="binding site" description="in other chain" evidence="4">
    <location>
        <begin position="538"/>
        <end position="542"/>
    </location>
    <ligand>
        <name>beta-D-fructose 2,6-bisphosphate</name>
        <dbReference type="ChEBI" id="CHEBI:58579"/>
        <note>allosteric activator; ligand shared between dimeric partners</note>
    </ligand>
</feature>
<feature type="binding site" evidence="4">
    <location>
        <position position="576"/>
    </location>
    <ligand>
        <name>beta-D-fructose 2,6-bisphosphate</name>
        <dbReference type="ChEBI" id="CHEBI:58579"/>
        <note>allosteric activator; ligand shared between dimeric partners</note>
    </ligand>
</feature>
<feature type="binding site" description="in other chain" evidence="4">
    <location>
        <begin position="583"/>
        <end position="585"/>
    </location>
    <ligand>
        <name>beta-D-fructose 2,6-bisphosphate</name>
        <dbReference type="ChEBI" id="CHEBI:58579"/>
        <note>allosteric activator; ligand shared between dimeric partners</note>
    </ligand>
</feature>
<feature type="binding site" description="in other chain" evidence="4">
    <location>
        <position position="639"/>
    </location>
    <ligand>
        <name>beta-D-fructose 2,6-bisphosphate</name>
        <dbReference type="ChEBI" id="CHEBI:58579"/>
        <note>allosteric activator; ligand shared between dimeric partners</note>
    </ligand>
</feature>
<feature type="binding site" evidence="4">
    <location>
        <position position="665"/>
    </location>
    <ligand>
        <name>beta-D-fructose 2,6-bisphosphate</name>
        <dbReference type="ChEBI" id="CHEBI:58579"/>
        <note>allosteric activator; ligand shared between dimeric partners</note>
    </ligand>
</feature>
<feature type="binding site" description="in other chain" evidence="4">
    <location>
        <begin position="671"/>
        <end position="674"/>
    </location>
    <ligand>
        <name>beta-D-fructose 2,6-bisphosphate</name>
        <dbReference type="ChEBI" id="CHEBI:58579"/>
        <note>allosteric activator; ligand shared between dimeric partners</note>
    </ligand>
</feature>
<feature type="binding site" description="in other chain" evidence="4">
    <location>
        <position position="744"/>
    </location>
    <ligand>
        <name>beta-D-fructose 2,6-bisphosphate</name>
        <dbReference type="ChEBI" id="CHEBI:58579"/>
        <note>allosteric activator; ligand shared between dimeric partners</note>
    </ligand>
</feature>
<feature type="modified residue" description="N-acetylmethionine" evidence="3">
    <location>
        <position position="1"/>
    </location>
</feature>
<feature type="modified residue" description="Phosphoserine" evidence="3">
    <location>
        <position position="6"/>
    </location>
</feature>
<feature type="modified residue" description="Phosphoserine; by PKA" evidence="5">
    <location>
        <position position="12"/>
    </location>
</feature>
<feature type="modified residue" description="Phosphoserine" evidence="3">
    <location>
        <position position="21"/>
    </location>
</feature>
<feature type="modified residue" description="Phosphoserine" evidence="2">
    <location>
        <position position="142"/>
    </location>
</feature>
<feature type="modified residue" description="Phosphoserine" evidence="3">
    <location>
        <position position="386"/>
    </location>
</feature>
<feature type="modified residue" description="N6-acetyllysine" evidence="3">
    <location>
        <position position="395"/>
    </location>
</feature>
<feature type="modified residue" description="N6-acetyllysine" evidence="3">
    <location>
        <position position="486"/>
    </location>
</feature>
<feature type="modified residue" description="Phosphotyrosine" evidence="3">
    <location>
        <position position="651"/>
    </location>
</feature>
<feature type="modified residue" description="N6-acetyllysine" evidence="3">
    <location>
        <position position="688"/>
    </location>
</feature>
<feature type="glycosylation site" description="O-linked (GlcNAc) serine" evidence="1">
    <location>
        <position position="540"/>
    </location>
</feature>
<organism>
    <name type="scientific">Oryctolagus cuniculus</name>
    <name type="common">Rabbit</name>
    <dbReference type="NCBI Taxonomy" id="9986"/>
    <lineage>
        <taxon>Eukaryota</taxon>
        <taxon>Metazoa</taxon>
        <taxon>Chordata</taxon>
        <taxon>Craniata</taxon>
        <taxon>Vertebrata</taxon>
        <taxon>Euteleostomi</taxon>
        <taxon>Mammalia</taxon>
        <taxon>Eutheria</taxon>
        <taxon>Euarchontoglires</taxon>
        <taxon>Glires</taxon>
        <taxon>Lagomorpha</taxon>
        <taxon>Leporidae</taxon>
        <taxon>Oryctolagus</taxon>
    </lineage>
</organism>